<dbReference type="EC" id="3.1.-.-" evidence="1"/>
<dbReference type="EMBL" id="CP000915">
    <property type="protein sequence ID" value="ACD30890.1"/>
    <property type="molecule type" value="Genomic_DNA"/>
</dbReference>
<dbReference type="SMR" id="B2SGN1"/>
<dbReference type="KEGG" id="ftm:FTM_0962"/>
<dbReference type="HOGENOM" id="CLU_098240_3_0_6"/>
<dbReference type="GO" id="GO:0005829">
    <property type="term" value="C:cytosol"/>
    <property type="evidence" value="ECO:0007669"/>
    <property type="project" value="TreeGrafter"/>
</dbReference>
<dbReference type="GO" id="GO:0004518">
    <property type="term" value="F:nuclease activity"/>
    <property type="evidence" value="ECO:0007669"/>
    <property type="project" value="UniProtKB-KW"/>
</dbReference>
<dbReference type="GO" id="GO:0000967">
    <property type="term" value="P:rRNA 5'-end processing"/>
    <property type="evidence" value="ECO:0007669"/>
    <property type="project" value="UniProtKB-UniRule"/>
</dbReference>
<dbReference type="CDD" id="cd16964">
    <property type="entry name" value="YqgF"/>
    <property type="match status" value="1"/>
</dbReference>
<dbReference type="Gene3D" id="3.30.420.140">
    <property type="entry name" value="YqgF/RNase H-like domain"/>
    <property type="match status" value="1"/>
</dbReference>
<dbReference type="HAMAP" id="MF_00651">
    <property type="entry name" value="Nuclease_YqgF"/>
    <property type="match status" value="1"/>
</dbReference>
<dbReference type="InterPro" id="IPR012337">
    <property type="entry name" value="RNaseH-like_sf"/>
</dbReference>
<dbReference type="InterPro" id="IPR005227">
    <property type="entry name" value="YqgF"/>
</dbReference>
<dbReference type="InterPro" id="IPR006641">
    <property type="entry name" value="YqgF/RNaseH-like_dom"/>
</dbReference>
<dbReference type="InterPro" id="IPR037027">
    <property type="entry name" value="YqgF/RNaseH-like_dom_sf"/>
</dbReference>
<dbReference type="NCBIfam" id="TIGR00250">
    <property type="entry name" value="RNAse_H_YqgF"/>
    <property type="match status" value="1"/>
</dbReference>
<dbReference type="PANTHER" id="PTHR33317">
    <property type="entry name" value="POLYNUCLEOTIDYL TRANSFERASE, RIBONUCLEASE H-LIKE SUPERFAMILY PROTEIN"/>
    <property type="match status" value="1"/>
</dbReference>
<dbReference type="PANTHER" id="PTHR33317:SF4">
    <property type="entry name" value="POLYNUCLEOTIDYL TRANSFERASE, RIBONUCLEASE H-LIKE SUPERFAMILY PROTEIN"/>
    <property type="match status" value="1"/>
</dbReference>
<dbReference type="Pfam" id="PF03652">
    <property type="entry name" value="RuvX"/>
    <property type="match status" value="1"/>
</dbReference>
<dbReference type="SMART" id="SM00732">
    <property type="entry name" value="YqgFc"/>
    <property type="match status" value="1"/>
</dbReference>
<dbReference type="SUPFAM" id="SSF53098">
    <property type="entry name" value="Ribonuclease H-like"/>
    <property type="match status" value="1"/>
</dbReference>
<gene>
    <name type="ordered locus">FTM_0962</name>
</gene>
<proteinExistence type="inferred from homology"/>
<sequence length="136" mass="15572">MFQSLIAIDYGKARIGIASGQMITKTATPIGTVEAYDGVPNWIELDKIIKRWNPSDIIIGLPLDTQNFETDITKSAKDFAKEVQQRYQRKVHLINEAYSTREARWRLEEFKSKKISHIKVDALAACVILETWMSEN</sequence>
<evidence type="ECO:0000255" key="1">
    <source>
        <dbReference type="HAMAP-Rule" id="MF_00651"/>
    </source>
</evidence>
<reference key="1">
    <citation type="journal article" date="2009" name="PLoS Pathog.">
        <title>Molecular evolutionary consequences of niche restriction in Francisella tularensis, a facultative intracellular pathogen.</title>
        <authorList>
            <person name="Larsson P."/>
            <person name="Elfsmark D."/>
            <person name="Svensson K."/>
            <person name="Wikstroem P."/>
            <person name="Forsman M."/>
            <person name="Brettin T."/>
            <person name="Keim P."/>
            <person name="Johansson A."/>
        </authorList>
    </citation>
    <scope>NUCLEOTIDE SEQUENCE [LARGE SCALE GENOMIC DNA]</scope>
    <source>
        <strain>FSC147</strain>
    </source>
</reference>
<organism>
    <name type="scientific">Francisella tularensis subsp. mediasiatica (strain FSC147)</name>
    <dbReference type="NCBI Taxonomy" id="441952"/>
    <lineage>
        <taxon>Bacteria</taxon>
        <taxon>Pseudomonadati</taxon>
        <taxon>Pseudomonadota</taxon>
        <taxon>Gammaproteobacteria</taxon>
        <taxon>Thiotrichales</taxon>
        <taxon>Francisellaceae</taxon>
        <taxon>Francisella</taxon>
    </lineage>
</organism>
<comment type="function">
    <text evidence="1">Could be a nuclease involved in processing of the 5'-end of pre-16S rRNA.</text>
</comment>
<comment type="subcellular location">
    <subcellularLocation>
        <location evidence="1">Cytoplasm</location>
    </subcellularLocation>
</comment>
<comment type="similarity">
    <text evidence="1">Belongs to the YqgF nuclease family.</text>
</comment>
<feature type="chain" id="PRO_1000131036" description="Putative pre-16S rRNA nuclease">
    <location>
        <begin position="1"/>
        <end position="136"/>
    </location>
</feature>
<name>YQGF_FRATM</name>
<keyword id="KW-0963">Cytoplasm</keyword>
<keyword id="KW-0378">Hydrolase</keyword>
<keyword id="KW-0540">Nuclease</keyword>
<keyword id="KW-0690">Ribosome biogenesis</keyword>
<protein>
    <recommendedName>
        <fullName evidence="1">Putative pre-16S rRNA nuclease</fullName>
        <ecNumber evidence="1">3.1.-.-</ecNumber>
    </recommendedName>
</protein>
<accession>B2SGN1</accession>